<accession>O85818</accession>
<sequence>MENTVQNKPIIELRSITKSYGSNTIIKDFNLTINNGEFLTILGPSGCGKTTVLRLLAGLEELDSGNIILDGEDITNVPAEKRHVNTVFQSYALFPHMTIFENVAFGLRMQKVPEAEIKPRVLEALRMVQLEEMADRKPTQLSGGQQQRIAIARAVVNKPKVLLLDESLSALDYKLRKQMQYELKVLQRQLGITFIFVTHDQEEAITMSDRIVLLRKGKIAQDGSPREIYEEPANLFVARFIGEINVFDATVIERKSENVVLANVEGRVCDIYTDIPVKKDQQLQVLLRPEDIVIKELDEHEHSKAIIGHIIDRTYKGMTLESTVEFEQNGKRGLVSEFFNEDDPHMDHSIGQRVGITWHEGWEVVLNDEDNQ</sequence>
<keyword id="KW-0067">ATP-binding</keyword>
<keyword id="KW-0997">Cell inner membrane</keyword>
<keyword id="KW-1003">Cell membrane</keyword>
<keyword id="KW-0472">Membrane</keyword>
<keyword id="KW-0547">Nucleotide-binding</keyword>
<keyword id="KW-1278">Translocase</keyword>
<keyword id="KW-0813">Transport</keyword>
<feature type="chain" id="PRO_0000286187" description="Spermidine/putrescine import ATP-binding protein PotA">
    <location>
        <begin position="1"/>
        <end position="372"/>
    </location>
</feature>
<feature type="domain" description="ABC transporter" evidence="1">
    <location>
        <begin position="11"/>
        <end position="241"/>
    </location>
</feature>
<feature type="binding site" evidence="1">
    <location>
        <begin position="43"/>
        <end position="50"/>
    </location>
    <ligand>
        <name>ATP</name>
        <dbReference type="ChEBI" id="CHEBI:30616"/>
    </ligand>
</feature>
<organism>
    <name type="scientific">Aggregatibacter actinomycetemcomitans</name>
    <name type="common">Actinobacillus actinomycetemcomitans</name>
    <name type="synonym">Haemophilus actinomycetemcomitans</name>
    <dbReference type="NCBI Taxonomy" id="714"/>
    <lineage>
        <taxon>Bacteria</taxon>
        <taxon>Pseudomonadati</taxon>
        <taxon>Pseudomonadota</taxon>
        <taxon>Gammaproteobacteria</taxon>
        <taxon>Pasteurellales</taxon>
        <taxon>Pasteurellaceae</taxon>
        <taxon>Aggregatibacter</taxon>
    </lineage>
</organism>
<gene>
    <name evidence="1" type="primary">potA</name>
</gene>
<name>POTA_AGGAC</name>
<reference key="1">
    <citation type="submission" date="1998-07" db="EMBL/GenBank/DDBJ databases">
        <title>Demonstration of a polyamine requirement for growth of Actinobacillus actinomycetemcomitans, and identification of the putative polyamine transport operon.</title>
        <authorList>
            <person name="Winston J.L."/>
            <person name="Sezate S.A."/>
            <person name="Dyer D.W."/>
            <person name="McLaughlin R.E."/>
        </authorList>
    </citation>
    <scope>NUCLEOTIDE SEQUENCE [GENOMIC DNA]</scope>
    <source>
        <strain>ATCC 43718 / FDC Y4 / Serotype b</strain>
    </source>
</reference>
<protein>
    <recommendedName>
        <fullName evidence="1">Spermidine/putrescine import ATP-binding protein PotA</fullName>
        <ecNumber evidence="1">7.6.2.11</ecNumber>
    </recommendedName>
</protein>
<dbReference type="EC" id="7.6.2.11" evidence="1"/>
<dbReference type="EMBL" id="AF077856">
    <property type="protein sequence ID" value="AAC27495.1"/>
    <property type="molecule type" value="Genomic_DNA"/>
</dbReference>
<dbReference type="SMR" id="O85818"/>
<dbReference type="STRING" id="714.ACT75_09915"/>
<dbReference type="eggNOG" id="COG3842">
    <property type="taxonomic scope" value="Bacteria"/>
</dbReference>
<dbReference type="GO" id="GO:0043190">
    <property type="term" value="C:ATP-binding cassette (ABC) transporter complex"/>
    <property type="evidence" value="ECO:0007669"/>
    <property type="project" value="InterPro"/>
</dbReference>
<dbReference type="GO" id="GO:0015594">
    <property type="term" value="F:ABC-type putrescine transporter activity"/>
    <property type="evidence" value="ECO:0007669"/>
    <property type="project" value="InterPro"/>
</dbReference>
<dbReference type="GO" id="GO:0005524">
    <property type="term" value="F:ATP binding"/>
    <property type="evidence" value="ECO:0007669"/>
    <property type="project" value="UniProtKB-KW"/>
</dbReference>
<dbReference type="GO" id="GO:0016887">
    <property type="term" value="F:ATP hydrolysis activity"/>
    <property type="evidence" value="ECO:0007669"/>
    <property type="project" value="InterPro"/>
</dbReference>
<dbReference type="CDD" id="cd03300">
    <property type="entry name" value="ABC_PotA_N"/>
    <property type="match status" value="1"/>
</dbReference>
<dbReference type="FunFam" id="3.40.50.300:FF:000133">
    <property type="entry name" value="Spermidine/putrescine import ATP-binding protein PotA"/>
    <property type="match status" value="1"/>
</dbReference>
<dbReference type="Gene3D" id="2.40.50.100">
    <property type="match status" value="1"/>
</dbReference>
<dbReference type="Gene3D" id="3.40.50.300">
    <property type="entry name" value="P-loop containing nucleotide triphosphate hydrolases"/>
    <property type="match status" value="1"/>
</dbReference>
<dbReference type="InterPro" id="IPR003593">
    <property type="entry name" value="AAA+_ATPase"/>
</dbReference>
<dbReference type="InterPro" id="IPR050093">
    <property type="entry name" value="ABC_SmlMolc_Importer"/>
</dbReference>
<dbReference type="InterPro" id="IPR003439">
    <property type="entry name" value="ABC_transporter-like_ATP-bd"/>
</dbReference>
<dbReference type="InterPro" id="IPR017871">
    <property type="entry name" value="ABC_transporter-like_CS"/>
</dbReference>
<dbReference type="InterPro" id="IPR008995">
    <property type="entry name" value="Mo/tungstate-bd_C_term_dom"/>
</dbReference>
<dbReference type="InterPro" id="IPR027417">
    <property type="entry name" value="P-loop_NTPase"/>
</dbReference>
<dbReference type="InterPro" id="IPR005893">
    <property type="entry name" value="PotA-like"/>
</dbReference>
<dbReference type="InterPro" id="IPR017879">
    <property type="entry name" value="PotA_ATP-bd"/>
</dbReference>
<dbReference type="InterPro" id="IPR013611">
    <property type="entry name" value="Transp-assoc_OB_typ2"/>
</dbReference>
<dbReference type="NCBIfam" id="TIGR01187">
    <property type="entry name" value="potA"/>
    <property type="match status" value="1"/>
</dbReference>
<dbReference type="NCBIfam" id="NF006987">
    <property type="entry name" value="PRK09452.1"/>
    <property type="match status" value="1"/>
</dbReference>
<dbReference type="PANTHER" id="PTHR42781">
    <property type="entry name" value="SPERMIDINE/PUTRESCINE IMPORT ATP-BINDING PROTEIN POTA"/>
    <property type="match status" value="1"/>
</dbReference>
<dbReference type="PANTHER" id="PTHR42781:SF4">
    <property type="entry name" value="SPERMIDINE_PUTRESCINE IMPORT ATP-BINDING PROTEIN POTA"/>
    <property type="match status" value="1"/>
</dbReference>
<dbReference type="Pfam" id="PF00005">
    <property type="entry name" value="ABC_tran"/>
    <property type="match status" value="1"/>
</dbReference>
<dbReference type="Pfam" id="PF08402">
    <property type="entry name" value="TOBE_2"/>
    <property type="match status" value="1"/>
</dbReference>
<dbReference type="SMART" id="SM00382">
    <property type="entry name" value="AAA"/>
    <property type="match status" value="1"/>
</dbReference>
<dbReference type="SUPFAM" id="SSF50331">
    <property type="entry name" value="MOP-like"/>
    <property type="match status" value="1"/>
</dbReference>
<dbReference type="SUPFAM" id="SSF52540">
    <property type="entry name" value="P-loop containing nucleoside triphosphate hydrolases"/>
    <property type="match status" value="1"/>
</dbReference>
<dbReference type="PROSITE" id="PS00211">
    <property type="entry name" value="ABC_TRANSPORTER_1"/>
    <property type="match status" value="1"/>
</dbReference>
<dbReference type="PROSITE" id="PS50893">
    <property type="entry name" value="ABC_TRANSPORTER_2"/>
    <property type="match status" value="1"/>
</dbReference>
<dbReference type="PROSITE" id="PS51305">
    <property type="entry name" value="POTA"/>
    <property type="match status" value="1"/>
</dbReference>
<proteinExistence type="inferred from homology"/>
<evidence type="ECO:0000255" key="1">
    <source>
        <dbReference type="HAMAP-Rule" id="MF_01726"/>
    </source>
</evidence>
<comment type="function">
    <text evidence="1">Part of the ABC transporter complex PotABCD involved in spermidine/putrescine import. Responsible for energy coupling to the transport system.</text>
</comment>
<comment type="catalytic activity">
    <reaction evidence="1">
        <text>ATP + H2O + polyamine-[polyamine-binding protein]Side 1 = ADP + phosphate + polyamineSide 2 + [polyamine-binding protein]Side 1.</text>
        <dbReference type="EC" id="7.6.2.11"/>
    </reaction>
</comment>
<comment type="subunit">
    <text evidence="1">The complex is composed of two ATP-binding proteins (PotA), two transmembrane proteins (PotB and PotC) and a solute-binding protein (PotD).</text>
</comment>
<comment type="subcellular location">
    <subcellularLocation>
        <location evidence="1">Cell inner membrane</location>
        <topology evidence="1">Peripheral membrane protein</topology>
    </subcellularLocation>
</comment>
<comment type="similarity">
    <text evidence="1">Belongs to the ABC transporter superfamily. Spermidine/putrescine importer (TC 3.A.1.11.1) family.</text>
</comment>